<feature type="chain" id="PRO_0000371985" description="Protein FRIGIDA-ESSENTIAL 1">
    <location>
        <begin position="1"/>
        <end position="587"/>
    </location>
</feature>
<feature type="zinc finger region" description="C3H1-type" evidence="1">
    <location>
        <begin position="96"/>
        <end position="123"/>
    </location>
</feature>
<feature type="region of interest" description="Disordered" evidence="2">
    <location>
        <begin position="264"/>
        <end position="346"/>
    </location>
</feature>
<feature type="region of interest" description="Disordered" evidence="2">
    <location>
        <begin position="368"/>
        <end position="421"/>
    </location>
</feature>
<feature type="region of interest" description="Disordered" evidence="2">
    <location>
        <begin position="467"/>
        <end position="492"/>
    </location>
</feature>
<feature type="compositionally biased region" description="Low complexity" evidence="2">
    <location>
        <begin position="294"/>
        <end position="304"/>
    </location>
</feature>
<feature type="compositionally biased region" description="Basic and acidic residues" evidence="2">
    <location>
        <begin position="470"/>
        <end position="479"/>
    </location>
</feature>
<accession>Q84VG7</accession>
<reference key="1">
    <citation type="journal article" date="1999" name="Nature">
        <title>Sequence and analysis of chromosome 2 of the plant Arabidopsis thaliana.</title>
        <authorList>
            <person name="Lin X."/>
            <person name="Kaul S."/>
            <person name="Rounsley S.D."/>
            <person name="Shea T.P."/>
            <person name="Benito M.-I."/>
            <person name="Town C.D."/>
            <person name="Fujii C.Y."/>
            <person name="Mason T.M."/>
            <person name="Bowman C.L."/>
            <person name="Barnstead M.E."/>
            <person name="Feldblyum T.V."/>
            <person name="Buell C.R."/>
            <person name="Ketchum K.A."/>
            <person name="Lee J.J."/>
            <person name="Ronning C.M."/>
            <person name="Koo H.L."/>
            <person name="Moffat K.S."/>
            <person name="Cronin L.A."/>
            <person name="Shen M."/>
            <person name="Pai G."/>
            <person name="Van Aken S."/>
            <person name="Umayam L."/>
            <person name="Tallon L.J."/>
            <person name="Gill J.E."/>
            <person name="Adams M.D."/>
            <person name="Carrera A.J."/>
            <person name="Creasy T.H."/>
            <person name="Goodman H.M."/>
            <person name="Somerville C.R."/>
            <person name="Copenhaver G.P."/>
            <person name="Preuss D."/>
            <person name="Nierman W.C."/>
            <person name="White O."/>
            <person name="Eisen J.A."/>
            <person name="Salzberg S.L."/>
            <person name="Fraser C.M."/>
            <person name="Venter J.C."/>
        </authorList>
    </citation>
    <scope>NUCLEOTIDE SEQUENCE [LARGE SCALE GENOMIC DNA]</scope>
    <source>
        <strain>cv. Columbia</strain>
    </source>
</reference>
<reference key="2">
    <citation type="journal article" date="2017" name="Plant J.">
        <title>Araport11: a complete reannotation of the Arabidopsis thaliana reference genome.</title>
        <authorList>
            <person name="Cheng C.Y."/>
            <person name="Krishnakumar V."/>
            <person name="Chan A.P."/>
            <person name="Thibaud-Nissen F."/>
            <person name="Schobel S."/>
            <person name="Town C.D."/>
        </authorList>
    </citation>
    <scope>GENOME REANNOTATION</scope>
    <source>
        <strain>cv. Columbia</strain>
    </source>
</reference>
<reference key="3">
    <citation type="submission" date="2006-07" db="EMBL/GenBank/DDBJ databases">
        <title>Large-scale analysis of RIKEN Arabidopsis full-length (RAFL) cDNAs.</title>
        <authorList>
            <person name="Totoki Y."/>
            <person name="Seki M."/>
            <person name="Ishida J."/>
            <person name="Nakajima M."/>
            <person name="Enju A."/>
            <person name="Kamiya A."/>
            <person name="Narusaka M."/>
            <person name="Shin-i T."/>
            <person name="Nakagawa M."/>
            <person name="Sakamoto N."/>
            <person name="Oishi K."/>
            <person name="Kohara Y."/>
            <person name="Kobayashi M."/>
            <person name="Toyoda A."/>
            <person name="Sakaki Y."/>
            <person name="Sakurai T."/>
            <person name="Iida K."/>
            <person name="Akiyama K."/>
            <person name="Satou M."/>
            <person name="Toyoda T."/>
            <person name="Konagaya A."/>
            <person name="Carninci P."/>
            <person name="Kawai J."/>
            <person name="Hayashizaki Y."/>
            <person name="Shinozaki K."/>
        </authorList>
    </citation>
    <scope>NUCLEOTIDE SEQUENCE [LARGE SCALE MRNA]</scope>
    <source>
        <strain>cv. Columbia</strain>
    </source>
</reference>
<reference key="4">
    <citation type="journal article" date="2002" name="Plant Physiol.">
        <title>Cloning and sequencing of cDNAs for hypothetical genes from chromosome 2 of Arabidopsis.</title>
        <authorList>
            <person name="Xiao Y.-L."/>
            <person name="Malik M."/>
            <person name="Whitelaw C.A."/>
            <person name="Town C.D."/>
        </authorList>
    </citation>
    <scope>NUCLEOTIDE SEQUENCE [LARGE SCALE MRNA] OF 207-587</scope>
    <source>
        <strain>cv. Columbia</strain>
    </source>
</reference>
<reference key="5">
    <citation type="journal article" date="2005" name="Development">
        <title>FRIGIDA-ESSENTIAL 1 interacts genetically with FRIGIDA and FRIGIDA-LIKE 1 to promote the winter-annual habit of Arabidopsis thaliana.</title>
        <authorList>
            <person name="Schmitz R.J."/>
            <person name="Hong L."/>
            <person name="Michaels S."/>
            <person name="Amasino R.M."/>
        </authorList>
    </citation>
    <scope>FUNCTION</scope>
    <scope>SUBCELLULAR LOCATION</scope>
    <scope>TISSUE SPECIFICITY</scope>
</reference>
<reference key="6">
    <citation type="journal article" date="2008" name="BMC Genomics">
        <title>Genome-wide analysis of CCCH zinc finger family in Arabidopsis and rice.</title>
        <authorList>
            <person name="Wang D."/>
            <person name="Guo Y."/>
            <person name="Wu C."/>
            <person name="Yang G."/>
            <person name="Li Y."/>
            <person name="Zheng C."/>
        </authorList>
    </citation>
    <scope>NOMENCLATURE</scope>
</reference>
<reference key="7">
    <citation type="journal article" date="2011" name="Plant Cell">
        <title>The FRIGIDA complex activates transcription of FLC, a strong flowering repressor in Arabidopsis, by recruiting chromatin modification factors.</title>
        <authorList>
            <person name="Choi K."/>
            <person name="Kim J."/>
            <person name="Hwang H.J."/>
            <person name="Kim S."/>
            <person name="Park C."/>
            <person name="Kim S.Y."/>
            <person name="Lee I."/>
        </authorList>
    </citation>
    <scope>FUNCTION</scope>
    <scope>IDENTIFICATION BY MASS SPECTROMETRY IN THE FRI-C COMPLEX</scope>
    <scope>DOMAIN</scope>
    <scope>INTERACTION WITH FRI; FLX AND RIN1</scope>
</reference>
<dbReference type="EMBL" id="U78721">
    <property type="status" value="NOT_ANNOTATED_CDS"/>
    <property type="molecule type" value="Genomic_DNA"/>
</dbReference>
<dbReference type="EMBL" id="CP002685">
    <property type="protein sequence ID" value="AEC08893.1"/>
    <property type="molecule type" value="Genomic_DNA"/>
</dbReference>
<dbReference type="EMBL" id="AK228866">
    <property type="status" value="NOT_ANNOTATED_CDS"/>
    <property type="molecule type" value="mRNA"/>
</dbReference>
<dbReference type="EMBL" id="AY208186">
    <property type="protein sequence ID" value="AAO72717.1"/>
    <property type="molecule type" value="mRNA"/>
</dbReference>
<dbReference type="RefSeq" id="NP_850221.1">
    <property type="nucleotide sequence ID" value="NM_179890.4"/>
</dbReference>
<dbReference type="SMR" id="Q84VG7"/>
<dbReference type="BioGRID" id="3298">
    <property type="interactions" value="45"/>
</dbReference>
<dbReference type="FunCoup" id="Q84VG7">
    <property type="interactions" value="1367"/>
</dbReference>
<dbReference type="IntAct" id="Q84VG7">
    <property type="interactions" value="40"/>
</dbReference>
<dbReference type="STRING" id="3702.Q84VG7"/>
<dbReference type="GlyGen" id="Q84VG7">
    <property type="glycosylation" value="1 site"/>
</dbReference>
<dbReference type="iPTMnet" id="Q84VG7"/>
<dbReference type="PaxDb" id="3702-AT2G33835.1"/>
<dbReference type="ProteomicsDB" id="230507"/>
<dbReference type="EnsemblPlants" id="AT2G33835.1">
    <property type="protein sequence ID" value="AT2G33835.1"/>
    <property type="gene ID" value="AT2G33835"/>
</dbReference>
<dbReference type="GeneID" id="817951"/>
<dbReference type="Gramene" id="AT2G33835.1">
    <property type="protein sequence ID" value="AT2G33835.1"/>
    <property type="gene ID" value="AT2G33835"/>
</dbReference>
<dbReference type="KEGG" id="ath:AT2G33835"/>
<dbReference type="Araport" id="AT2G33835"/>
<dbReference type="TAIR" id="AT2G33835">
    <property type="gene designation" value="FES1"/>
</dbReference>
<dbReference type="eggNOG" id="ENOG502RGRS">
    <property type="taxonomic scope" value="Eukaryota"/>
</dbReference>
<dbReference type="HOGENOM" id="CLU_018375_0_0_1"/>
<dbReference type="InParanoid" id="Q84VG7"/>
<dbReference type="OMA" id="TKDVHNM"/>
<dbReference type="PhylomeDB" id="Q84VG7"/>
<dbReference type="PRO" id="PR:Q84VG7"/>
<dbReference type="Proteomes" id="UP000006548">
    <property type="component" value="Chromosome 2"/>
</dbReference>
<dbReference type="ExpressionAtlas" id="Q84VG7">
    <property type="expression patterns" value="baseline and differential"/>
</dbReference>
<dbReference type="GO" id="GO:0005634">
    <property type="term" value="C:nucleus"/>
    <property type="evidence" value="ECO:0007669"/>
    <property type="project" value="UniProtKB-SubCell"/>
</dbReference>
<dbReference type="GO" id="GO:0003677">
    <property type="term" value="F:DNA binding"/>
    <property type="evidence" value="ECO:0007669"/>
    <property type="project" value="UniProtKB-KW"/>
</dbReference>
<dbReference type="GO" id="GO:0008270">
    <property type="term" value="F:zinc ion binding"/>
    <property type="evidence" value="ECO:0007669"/>
    <property type="project" value="UniProtKB-KW"/>
</dbReference>
<dbReference type="GO" id="GO:0030154">
    <property type="term" value="P:cell differentiation"/>
    <property type="evidence" value="ECO:0007669"/>
    <property type="project" value="UniProtKB-KW"/>
</dbReference>
<dbReference type="GO" id="GO:0009908">
    <property type="term" value="P:flower development"/>
    <property type="evidence" value="ECO:0007669"/>
    <property type="project" value="UniProtKB-KW"/>
</dbReference>
<dbReference type="GO" id="GO:0010220">
    <property type="term" value="P:positive regulation of vernalization response"/>
    <property type="evidence" value="ECO:0000316"/>
    <property type="project" value="TAIR"/>
</dbReference>
<dbReference type="Gene3D" id="4.10.1000.10">
    <property type="entry name" value="Zinc finger, CCCH-type"/>
    <property type="match status" value="1"/>
</dbReference>
<dbReference type="InterPro" id="IPR052650">
    <property type="entry name" value="Zinc_finger_CCCH"/>
</dbReference>
<dbReference type="InterPro" id="IPR000571">
    <property type="entry name" value="Znf_CCCH"/>
</dbReference>
<dbReference type="InterPro" id="IPR036855">
    <property type="entry name" value="Znf_CCCH_sf"/>
</dbReference>
<dbReference type="PANTHER" id="PTHR36886">
    <property type="entry name" value="PROTEIN FRIGIDA-ESSENTIAL 1"/>
    <property type="match status" value="1"/>
</dbReference>
<dbReference type="PANTHER" id="PTHR36886:SF3">
    <property type="entry name" value="PROTEIN FRIGIDA-ESSENTIAL 1"/>
    <property type="match status" value="1"/>
</dbReference>
<dbReference type="Pfam" id="PF00642">
    <property type="entry name" value="zf-CCCH"/>
    <property type="match status" value="1"/>
</dbReference>
<dbReference type="SUPFAM" id="SSF90229">
    <property type="entry name" value="CCCH zinc finger"/>
    <property type="match status" value="1"/>
</dbReference>
<dbReference type="PROSITE" id="PS50103">
    <property type="entry name" value="ZF_C3H1"/>
    <property type="match status" value="1"/>
</dbReference>
<evidence type="ECO:0000255" key="1">
    <source>
        <dbReference type="PROSITE-ProRule" id="PRU00723"/>
    </source>
</evidence>
<evidence type="ECO:0000256" key="2">
    <source>
        <dbReference type="SAM" id="MobiDB-lite"/>
    </source>
</evidence>
<evidence type="ECO:0000269" key="3">
    <source>
    </source>
</evidence>
<evidence type="ECO:0000269" key="4">
    <source>
    </source>
</evidence>
<evidence type="ECO:0000305" key="5"/>
<name>FES1_ARATH</name>
<organism>
    <name type="scientific">Arabidopsis thaliana</name>
    <name type="common">Mouse-ear cress</name>
    <dbReference type="NCBI Taxonomy" id="3702"/>
    <lineage>
        <taxon>Eukaryota</taxon>
        <taxon>Viridiplantae</taxon>
        <taxon>Streptophyta</taxon>
        <taxon>Embryophyta</taxon>
        <taxon>Tracheophyta</taxon>
        <taxon>Spermatophyta</taxon>
        <taxon>Magnoliopsida</taxon>
        <taxon>eudicotyledons</taxon>
        <taxon>Gunneridae</taxon>
        <taxon>Pentapetalae</taxon>
        <taxon>rosids</taxon>
        <taxon>malvids</taxon>
        <taxon>Brassicales</taxon>
        <taxon>Brassicaceae</taxon>
        <taxon>Camelineae</taxon>
        <taxon>Arabidopsis</taxon>
    </lineage>
</organism>
<proteinExistence type="evidence at protein level"/>
<protein>
    <recommendedName>
        <fullName>Protein FRIGIDA-ESSENTIAL 1</fullName>
    </recommendedName>
    <alternativeName>
        <fullName>Zinc finger CCCH domain-containing protein 27</fullName>
        <shortName>AtC3H27</shortName>
    </alternativeName>
</protein>
<gene>
    <name type="primary">FES1</name>
    <name type="ordered locus">At2g33835</name>
    <name type="ORF">T1B8</name>
</gene>
<sequence length="587" mass="64376">MSDSDMDIDDDEVEQKVQVHTIVRESELFDKPPIQASNSHNDVKRHSVTTPLDEQSKIIKEQAFAQDNGTLPRFPAPGIPPRSFFTGGGGNEPEQKRAALPCKFFAKGWCFNGVSCKFLHVKENSNCTSQQLAENSMAGNGGIRSDLERRILDSREGVRVSQLSENGVTSLPTREDISFMNPQRVFSSMSFVNPPGSQRVFPFNNEMRFMPSFENIRRESLKQTYGADFTDNRSLVINNANSFALRSSFVHEHRPSISSYLKTDMGSAGPAWTGSLSSSVPMNDRASTVGDFENGNSLSGSGSLPTLQGVAVSSDKGAEANTTSTKKKVSSDDWEPSEPFKASFTIPPYILPSSDALYDPFTDIENLGDRPLNDSLSSKGEHARKSSCQQKDGDSASGPQARDCKNDDKSSSCSQNQHQETVARSLEAHGVVEGVATSVVDQNDTATPSKEISSATAAENRVVLKRIKPAGHDSWHRSDGSSYKKTKKSDEIDGEVRSDAGMKVMRLFRTAVVETIKEMLKPLWREGRLTKDVHNMIVKKAAEKVVGAAVQFHQVPTDTESVDQYLGLSGTRIVKLVEGYVEKYGKP</sequence>
<comment type="function">
    <text evidence="3 4">Transcriptional activator involved in the FRIGIDA-mediated vernalization pathway, but not in the autonomous flowering pathway. Acts cooperatively with FRI (FRIGIDA) or FRL1 (FRIGIDA-LIKE 1) to promote FLC (FLOWERING LOCUS C) expression. Required for the stabilization of the FRI-C complex.</text>
</comment>
<comment type="subunit">
    <text evidence="4">Component of the transcription activator complex FRI-C composed of FRI, FRL1, SUF4, FLX and FES1. Interacts with FLX, (via C-terminus) with FRI (via C-terminus), and with RIN1, a component of the SWR1 chromatin-remodeling complex.</text>
</comment>
<comment type="subcellular location">
    <subcellularLocation>
        <location evidence="3">Nucleus</location>
    </subcellularLocation>
</comment>
<comment type="tissue specificity">
    <text evidence="3">Expressed in root and shoot apices and vasculature.</text>
</comment>
<comment type="domain">
    <text evidence="4">The zinc-finger motif is essential for transcription activation.</text>
</comment>
<comment type="sequence caution" evidence="5">
    <conflict type="frameshift">
        <sequence resource="EMBL" id="AK228866"/>
    </conflict>
</comment>
<keyword id="KW-0217">Developmental protein</keyword>
<keyword id="KW-0221">Differentiation</keyword>
<keyword id="KW-0238">DNA-binding</keyword>
<keyword id="KW-0287">Flowering</keyword>
<keyword id="KW-0479">Metal-binding</keyword>
<keyword id="KW-0539">Nucleus</keyword>
<keyword id="KW-1185">Reference proteome</keyword>
<keyword id="KW-0862">Zinc</keyword>
<keyword id="KW-0863">Zinc-finger</keyword>